<comment type="function">
    <text evidence="1">Involved in iron-sulfur cluster biogenesis. Binds a 4Fe-4S cluster, can transfer this cluster to apoproteins, and thereby intervenes in the maturation of Fe/S proteins. Could also act as a scaffold/chaperone for damaged Fe/S proteins.</text>
</comment>
<comment type="cofactor">
    <cofactor evidence="1">
        <name>[4Fe-4S] cluster</name>
        <dbReference type="ChEBI" id="CHEBI:49883"/>
    </cofactor>
    <text evidence="1">Binds 1 [4Fe-4S] cluster per subunit. The cluster is presumably bound at the interface of two monomers.</text>
</comment>
<comment type="subunit">
    <text evidence="1">Homodimer.</text>
</comment>
<comment type="similarity">
    <text evidence="1">Belongs to the NfuA family.</text>
</comment>
<accession>B7MDP0</accession>
<dbReference type="EMBL" id="CU928161">
    <property type="protein sequence ID" value="CAR05015.1"/>
    <property type="molecule type" value="Genomic_DNA"/>
</dbReference>
<dbReference type="RefSeq" id="WP_000619389.1">
    <property type="nucleotide sequence ID" value="NC_011742.1"/>
</dbReference>
<dbReference type="SMR" id="B7MDP0"/>
<dbReference type="GeneID" id="93778582"/>
<dbReference type="KEGG" id="ecz:ECS88_3803"/>
<dbReference type="HOGENOM" id="CLU_094569_0_0_6"/>
<dbReference type="Proteomes" id="UP000000747">
    <property type="component" value="Chromosome"/>
</dbReference>
<dbReference type="GO" id="GO:0051539">
    <property type="term" value="F:4 iron, 4 sulfur cluster binding"/>
    <property type="evidence" value="ECO:0007669"/>
    <property type="project" value="UniProtKB-UniRule"/>
</dbReference>
<dbReference type="GO" id="GO:0005506">
    <property type="term" value="F:iron ion binding"/>
    <property type="evidence" value="ECO:0007669"/>
    <property type="project" value="InterPro"/>
</dbReference>
<dbReference type="GO" id="GO:0016226">
    <property type="term" value="P:iron-sulfur cluster assembly"/>
    <property type="evidence" value="ECO:0007669"/>
    <property type="project" value="UniProtKB-UniRule"/>
</dbReference>
<dbReference type="GO" id="GO:0051604">
    <property type="term" value="P:protein maturation"/>
    <property type="evidence" value="ECO:0007669"/>
    <property type="project" value="UniProtKB-UniRule"/>
</dbReference>
<dbReference type="FunFam" id="2.60.300.12:FF:000004">
    <property type="entry name" value="Fe/S biogenesis protein NfuA"/>
    <property type="match status" value="1"/>
</dbReference>
<dbReference type="FunFam" id="3.30.300.130:FF:000002">
    <property type="entry name" value="Fe/S biogenesis protein NfuA"/>
    <property type="match status" value="1"/>
</dbReference>
<dbReference type="Gene3D" id="3.30.300.130">
    <property type="entry name" value="Fe-S cluster assembly (FSCA)"/>
    <property type="match status" value="1"/>
</dbReference>
<dbReference type="Gene3D" id="2.60.300.12">
    <property type="entry name" value="HesB-like domain"/>
    <property type="match status" value="1"/>
</dbReference>
<dbReference type="HAMAP" id="MF_01637">
    <property type="entry name" value="Fe_S_biogen_NfuA"/>
    <property type="match status" value="1"/>
</dbReference>
<dbReference type="InterPro" id="IPR017726">
    <property type="entry name" value="Fe/S_biogenesis_protein_NfuA"/>
</dbReference>
<dbReference type="InterPro" id="IPR000361">
    <property type="entry name" value="FeS_biogenesis"/>
</dbReference>
<dbReference type="InterPro" id="IPR034904">
    <property type="entry name" value="FSCA_dom_sf"/>
</dbReference>
<dbReference type="InterPro" id="IPR035903">
    <property type="entry name" value="HesB-like_dom_sf"/>
</dbReference>
<dbReference type="InterPro" id="IPR001075">
    <property type="entry name" value="NIF_FeS_clus_asmbl_NifU_C"/>
</dbReference>
<dbReference type="NCBIfam" id="NF008392">
    <property type="entry name" value="PRK11190.1"/>
    <property type="match status" value="1"/>
</dbReference>
<dbReference type="NCBIfam" id="TIGR03341">
    <property type="entry name" value="YhgI_GntY"/>
    <property type="match status" value="1"/>
</dbReference>
<dbReference type="PANTHER" id="PTHR11178:SF51">
    <property type="entry name" value="FE_S BIOGENESIS PROTEIN NFUA"/>
    <property type="match status" value="1"/>
</dbReference>
<dbReference type="PANTHER" id="PTHR11178">
    <property type="entry name" value="IRON-SULFUR CLUSTER SCAFFOLD PROTEIN NFU-RELATED"/>
    <property type="match status" value="1"/>
</dbReference>
<dbReference type="Pfam" id="PF01521">
    <property type="entry name" value="Fe-S_biosyn"/>
    <property type="match status" value="1"/>
</dbReference>
<dbReference type="Pfam" id="PF01106">
    <property type="entry name" value="NifU"/>
    <property type="match status" value="1"/>
</dbReference>
<dbReference type="SUPFAM" id="SSF117916">
    <property type="entry name" value="Fe-S cluster assembly (FSCA) domain-like"/>
    <property type="match status" value="1"/>
</dbReference>
<dbReference type="SUPFAM" id="SSF89360">
    <property type="entry name" value="HesB-like domain"/>
    <property type="match status" value="1"/>
</dbReference>
<gene>
    <name evidence="1" type="primary">nfuA</name>
    <name type="ordered locus">ECS88_3803</name>
</gene>
<reference key="1">
    <citation type="journal article" date="2009" name="PLoS Genet.">
        <title>Organised genome dynamics in the Escherichia coli species results in highly diverse adaptive paths.</title>
        <authorList>
            <person name="Touchon M."/>
            <person name="Hoede C."/>
            <person name="Tenaillon O."/>
            <person name="Barbe V."/>
            <person name="Baeriswyl S."/>
            <person name="Bidet P."/>
            <person name="Bingen E."/>
            <person name="Bonacorsi S."/>
            <person name="Bouchier C."/>
            <person name="Bouvet O."/>
            <person name="Calteau A."/>
            <person name="Chiapello H."/>
            <person name="Clermont O."/>
            <person name="Cruveiller S."/>
            <person name="Danchin A."/>
            <person name="Diard M."/>
            <person name="Dossat C."/>
            <person name="Karoui M.E."/>
            <person name="Frapy E."/>
            <person name="Garry L."/>
            <person name="Ghigo J.M."/>
            <person name="Gilles A.M."/>
            <person name="Johnson J."/>
            <person name="Le Bouguenec C."/>
            <person name="Lescat M."/>
            <person name="Mangenot S."/>
            <person name="Martinez-Jehanne V."/>
            <person name="Matic I."/>
            <person name="Nassif X."/>
            <person name="Oztas S."/>
            <person name="Petit M.A."/>
            <person name="Pichon C."/>
            <person name="Rouy Z."/>
            <person name="Ruf C.S."/>
            <person name="Schneider D."/>
            <person name="Tourret J."/>
            <person name="Vacherie B."/>
            <person name="Vallenet D."/>
            <person name="Medigue C."/>
            <person name="Rocha E.P.C."/>
            <person name="Denamur E."/>
        </authorList>
    </citation>
    <scope>NUCLEOTIDE SEQUENCE [LARGE SCALE GENOMIC DNA]</scope>
    <source>
        <strain>S88 / ExPEC</strain>
    </source>
</reference>
<keyword id="KW-0004">4Fe-4S</keyword>
<keyword id="KW-0408">Iron</keyword>
<keyword id="KW-0411">Iron-sulfur</keyword>
<keyword id="KW-0479">Metal-binding</keyword>
<keyword id="KW-1185">Reference proteome</keyword>
<organism>
    <name type="scientific">Escherichia coli O45:K1 (strain S88 / ExPEC)</name>
    <dbReference type="NCBI Taxonomy" id="585035"/>
    <lineage>
        <taxon>Bacteria</taxon>
        <taxon>Pseudomonadati</taxon>
        <taxon>Pseudomonadota</taxon>
        <taxon>Gammaproteobacteria</taxon>
        <taxon>Enterobacterales</taxon>
        <taxon>Enterobacteriaceae</taxon>
        <taxon>Escherichia</taxon>
    </lineage>
</organism>
<feature type="chain" id="PRO_1000186743" description="Fe/S biogenesis protein NfuA">
    <location>
        <begin position="1"/>
        <end position="191"/>
    </location>
</feature>
<feature type="binding site" evidence="1">
    <location>
        <position position="149"/>
    </location>
    <ligand>
        <name>[4Fe-4S] cluster</name>
        <dbReference type="ChEBI" id="CHEBI:49883"/>
    </ligand>
</feature>
<feature type="binding site" evidence="1">
    <location>
        <position position="152"/>
    </location>
    <ligand>
        <name>[4Fe-4S] cluster</name>
        <dbReference type="ChEBI" id="CHEBI:49883"/>
    </ligand>
</feature>
<sequence length="191" mass="20998">MIRISDAAQAHFAKLLANQEEGTQIRVFVINPGTPNAECGVSYCPPDAVEATDTALKFDLLTAYVDELSAPYLEDAEIDFVTDQLGSQLTLKAPNAKMRKVADDAPLMERVEYMLQSQINPQLAGHGGRVSLMEITEDGYAILQFGGGCNGCSMVDVTLKEGIEKQLLNEFPELKGVRDLTEHQRGEHSYY</sequence>
<name>NFUA_ECO45</name>
<evidence type="ECO:0000255" key="1">
    <source>
        <dbReference type="HAMAP-Rule" id="MF_01637"/>
    </source>
</evidence>
<protein>
    <recommendedName>
        <fullName evidence="1">Fe/S biogenesis protein NfuA</fullName>
    </recommendedName>
</protein>
<proteinExistence type="inferred from homology"/>